<name>ADDB_LYSSC</name>
<dbReference type="EC" id="3.1.-.-" evidence="1"/>
<dbReference type="EMBL" id="CP000817">
    <property type="protein sequence ID" value="ACA38806.1"/>
    <property type="molecule type" value="Genomic_DNA"/>
</dbReference>
<dbReference type="RefSeq" id="WP_012292937.1">
    <property type="nucleotide sequence ID" value="NC_010382.1"/>
</dbReference>
<dbReference type="SMR" id="B1HN89"/>
<dbReference type="EnsemblBacteria" id="ACA38806">
    <property type="protein sequence ID" value="ACA38806"/>
    <property type="gene ID" value="Bsph_1198"/>
</dbReference>
<dbReference type="KEGG" id="lsp:Bsph_1198"/>
<dbReference type="HOGENOM" id="CLU_007838_0_0_9"/>
<dbReference type="Proteomes" id="UP000002164">
    <property type="component" value="Chromosome"/>
</dbReference>
<dbReference type="GO" id="GO:0051539">
    <property type="term" value="F:4 iron, 4 sulfur cluster binding"/>
    <property type="evidence" value="ECO:0007669"/>
    <property type="project" value="UniProtKB-KW"/>
</dbReference>
<dbReference type="GO" id="GO:0008409">
    <property type="term" value="F:5'-3' exonuclease activity"/>
    <property type="evidence" value="ECO:0007669"/>
    <property type="project" value="UniProtKB-UniRule"/>
</dbReference>
<dbReference type="GO" id="GO:0005524">
    <property type="term" value="F:ATP binding"/>
    <property type="evidence" value="ECO:0007669"/>
    <property type="project" value="UniProtKB-UniRule"/>
</dbReference>
<dbReference type="GO" id="GO:0003690">
    <property type="term" value="F:double-stranded DNA binding"/>
    <property type="evidence" value="ECO:0007669"/>
    <property type="project" value="UniProtKB-UniRule"/>
</dbReference>
<dbReference type="GO" id="GO:0004386">
    <property type="term" value="F:helicase activity"/>
    <property type="evidence" value="ECO:0007669"/>
    <property type="project" value="UniProtKB-KW"/>
</dbReference>
<dbReference type="GO" id="GO:0046872">
    <property type="term" value="F:metal ion binding"/>
    <property type="evidence" value="ECO:0007669"/>
    <property type="project" value="UniProtKB-KW"/>
</dbReference>
<dbReference type="GO" id="GO:0000724">
    <property type="term" value="P:double-strand break repair via homologous recombination"/>
    <property type="evidence" value="ECO:0007669"/>
    <property type="project" value="UniProtKB-UniRule"/>
</dbReference>
<dbReference type="Gene3D" id="3.90.320.10">
    <property type="match status" value="1"/>
</dbReference>
<dbReference type="Gene3D" id="6.10.140.1030">
    <property type="match status" value="1"/>
</dbReference>
<dbReference type="Gene3D" id="3.40.50.300">
    <property type="entry name" value="P-loop containing nucleotide triphosphate hydrolases"/>
    <property type="match status" value="4"/>
</dbReference>
<dbReference type="HAMAP" id="MF_01452">
    <property type="entry name" value="AddB_type1"/>
    <property type="match status" value="1"/>
</dbReference>
<dbReference type="InterPro" id="IPR049035">
    <property type="entry name" value="ADDB_N"/>
</dbReference>
<dbReference type="InterPro" id="IPR014140">
    <property type="entry name" value="DNA_helicase_suAddB"/>
</dbReference>
<dbReference type="InterPro" id="IPR014017">
    <property type="entry name" value="DNA_helicase_UvrD-like_C"/>
</dbReference>
<dbReference type="InterPro" id="IPR027417">
    <property type="entry name" value="P-loop_NTPase"/>
</dbReference>
<dbReference type="InterPro" id="IPR011604">
    <property type="entry name" value="PDDEXK-like_dom_sf"/>
</dbReference>
<dbReference type="InterPro" id="IPR038726">
    <property type="entry name" value="PDDEXK_AddAB-type"/>
</dbReference>
<dbReference type="NCBIfam" id="TIGR02773">
    <property type="entry name" value="addB_Gpos"/>
    <property type="match status" value="1"/>
</dbReference>
<dbReference type="PANTHER" id="PTHR30591">
    <property type="entry name" value="RECBCD ENZYME SUBUNIT RECC"/>
    <property type="match status" value="1"/>
</dbReference>
<dbReference type="PANTHER" id="PTHR30591:SF1">
    <property type="entry name" value="RECBCD ENZYME SUBUNIT RECC"/>
    <property type="match status" value="1"/>
</dbReference>
<dbReference type="Pfam" id="PF21445">
    <property type="entry name" value="ADDB_N"/>
    <property type="match status" value="1"/>
</dbReference>
<dbReference type="Pfam" id="PF12705">
    <property type="entry name" value="PDDEXK_1"/>
    <property type="match status" value="1"/>
</dbReference>
<dbReference type="SUPFAM" id="SSF52540">
    <property type="entry name" value="P-loop containing nucleoside triphosphate hydrolases"/>
    <property type="match status" value="1"/>
</dbReference>
<dbReference type="PROSITE" id="PS51198">
    <property type="entry name" value="UVRD_HELICASE_ATP_BIND"/>
    <property type="match status" value="1"/>
</dbReference>
<dbReference type="PROSITE" id="PS51217">
    <property type="entry name" value="UVRD_HELICASE_CTER"/>
    <property type="match status" value="1"/>
</dbReference>
<sequence length="1169" mass="135538">MTLRIVSGRSGTGKSVFIHQEIVEQLKSDPLGHPIFIIVPDQMSYSTEYELTNRHGLQGLIRAQVMTFKRLAWLVLQETGGIARKEVNGYGYRMLIRKLLEEQKSEFSLFRQAAGKRGFTEEIETLLKEFSRYSVNSSVLAEVKESLKAIDAPNTLQAKTNDLYVVLQALEERLGTTYVDSEGYYPILTEQLKYAETMKQATIYIDGFTAFTVRELELVRELLKVTKHVTVVLPFDHIDEAFDEQALFHEAALTNQRLHDIANEEGIDVEPPLHFYYTQRFQSEDLQHVEANFANMVPHTKKTSGDVMVFEASNRRAEVHAIAREITKLTREYGYRYQDIVLLYRQAELYDPLITSIFQQYEIPIFTNTKKTMLHHPLIELSRSALEIMTSNWKYEPVFRSVKTDLFFPLQAELTIWRERADRLENYCLAQGIYGERWFEEPRWFYKKYRGLEFHSRVQTDEERAMQAEIEAIRDEIRQPLKSLQDKLSIASTGKDIATALFELVESLQVYEKLQAMKDRELERGDALAASEHEQAWNEWINVLDQFVYMFGEQEMSVEEAAKILDEGFDTLEFSRIPPTLDEVMVATVDLARLSNIKVAFVLGMNDGVYPTRMEYEGLLSDTEREWFSQIGYELAPTSSNRLLQENFLFYRAASTPSNKLYLTYPTADEEGKALLSSLYIKKFIGNDKIAGLLSGVQAERVVMDPIELLDESALPYLRHPRTALAHLMVQLRQAEHSRELAPEWLALQKFYQQDPYWALIFDRVHYPITHKNEAEPLETYITQELYGQKLTSSVSRIEKYFRCPFSHFTTYGLRLEERAEYRLETFAMGDLFHEALKWITEETHRLQLSWIRLTKQQIKQLARQAVEQIVPVFSHQILLSSARYRYIQRKLIRIVERTMMALTQHANVSHFKPIAIEASFGPGQHEQLPPLEIDLTSGKKMFMRGRIDRIDSATIDDRSYLRIVDYKSSARDLDLNEVYYGLSLQVLTYLDVAMENSTYWLPGETEPAGVLYVHVHNPMLKLDKDMTDSEIEEDRLKQYKMKGLLSENAESILSMDEQLEESSGHSKIIPVYMKKDGTPSESQSRIVPVNDMKRLQHFVRRKHQEAGNGILSGDTAISPYKLKSKTACDYCQFAAVCQFDPSDGKQNYRQLMQAKPNEIVDKIRKEIE</sequence>
<proteinExistence type="inferred from homology"/>
<gene>
    <name evidence="1" type="primary">addB</name>
    <name type="ordered locus">Bsph_1198</name>
</gene>
<comment type="function">
    <text evidence="1">The heterodimer acts as both an ATP-dependent DNA helicase and an ATP-dependent, dual-direction single-stranded exonuclease. Recognizes the chi site generating a DNA molecule suitable for the initiation of homologous recombination. The AddB subunit has 5' -&gt; 3' nuclease activity but not helicase activity.</text>
</comment>
<comment type="cofactor">
    <cofactor evidence="1">
        <name>Mg(2+)</name>
        <dbReference type="ChEBI" id="CHEBI:18420"/>
    </cofactor>
</comment>
<comment type="cofactor">
    <cofactor evidence="1">
        <name>[4Fe-4S] cluster</name>
        <dbReference type="ChEBI" id="CHEBI:49883"/>
    </cofactor>
    <text evidence="1">Binds 1 [4Fe-4S] cluster.</text>
</comment>
<comment type="subunit">
    <text evidence="1">Heterodimer of AddA and AddB.</text>
</comment>
<comment type="miscellaneous">
    <text evidence="1">Despite having conserved helicase domains, this subunit does not have helicase activity.</text>
</comment>
<comment type="similarity">
    <text evidence="1">Belongs to the helicase family. AddB/RexB type 1 subfamily.</text>
</comment>
<protein>
    <recommendedName>
        <fullName evidence="1">ATP-dependent helicase/deoxyribonuclease subunit B</fullName>
        <ecNumber evidence="1">3.1.-.-</ecNumber>
    </recommendedName>
    <alternativeName>
        <fullName evidence="1">ATP-dependent helicase/nuclease subunit AddB</fullName>
    </alternativeName>
</protein>
<evidence type="ECO:0000255" key="1">
    <source>
        <dbReference type="HAMAP-Rule" id="MF_01452"/>
    </source>
</evidence>
<organism>
    <name type="scientific">Lysinibacillus sphaericus (strain C3-41)</name>
    <dbReference type="NCBI Taxonomy" id="444177"/>
    <lineage>
        <taxon>Bacteria</taxon>
        <taxon>Bacillati</taxon>
        <taxon>Bacillota</taxon>
        <taxon>Bacilli</taxon>
        <taxon>Bacillales</taxon>
        <taxon>Bacillaceae</taxon>
        <taxon>Lysinibacillus</taxon>
    </lineage>
</organism>
<accession>B1HN89</accession>
<keyword id="KW-0004">4Fe-4S</keyword>
<keyword id="KW-0067">ATP-binding</keyword>
<keyword id="KW-0227">DNA damage</keyword>
<keyword id="KW-0234">DNA repair</keyword>
<keyword id="KW-0238">DNA-binding</keyword>
<keyword id="KW-0269">Exonuclease</keyword>
<keyword id="KW-0347">Helicase</keyword>
<keyword id="KW-0378">Hydrolase</keyword>
<keyword id="KW-0408">Iron</keyword>
<keyword id="KW-0411">Iron-sulfur</keyword>
<keyword id="KW-0479">Metal-binding</keyword>
<keyword id="KW-0540">Nuclease</keyword>
<keyword id="KW-0547">Nucleotide-binding</keyword>
<feature type="chain" id="PRO_0000379199" description="ATP-dependent helicase/deoxyribonuclease subunit B">
    <location>
        <begin position="1"/>
        <end position="1169"/>
    </location>
</feature>
<feature type="domain" description="UvrD-like helicase ATP-binding" evidence="1">
    <location>
        <begin position="1"/>
        <end position="296"/>
    </location>
</feature>
<feature type="domain" description="UvrD-like helicase C-terminal" evidence="1">
    <location>
        <begin position="276"/>
        <end position="582"/>
    </location>
</feature>
<feature type="binding site" evidence="1">
    <location>
        <begin position="8"/>
        <end position="15"/>
    </location>
    <ligand>
        <name>ATP</name>
        <dbReference type="ChEBI" id="CHEBI:30616"/>
    </ligand>
</feature>
<feature type="binding site" evidence="1">
    <location>
        <position position="804"/>
    </location>
    <ligand>
        <name>[4Fe-4S] cluster</name>
        <dbReference type="ChEBI" id="CHEBI:49883"/>
    </ligand>
</feature>
<feature type="binding site" evidence="1">
    <location>
        <position position="1129"/>
    </location>
    <ligand>
        <name>[4Fe-4S] cluster</name>
        <dbReference type="ChEBI" id="CHEBI:49883"/>
    </ligand>
</feature>
<feature type="binding site" evidence="1">
    <location>
        <position position="1132"/>
    </location>
    <ligand>
        <name>[4Fe-4S] cluster</name>
        <dbReference type="ChEBI" id="CHEBI:49883"/>
    </ligand>
</feature>
<feature type="binding site" evidence="1">
    <location>
        <position position="1138"/>
    </location>
    <ligand>
        <name>[4Fe-4S] cluster</name>
        <dbReference type="ChEBI" id="CHEBI:49883"/>
    </ligand>
</feature>
<reference key="1">
    <citation type="journal article" date="2008" name="J. Bacteriol.">
        <title>Complete genome sequence of the mosquitocidal bacterium Bacillus sphaericus C3-41 and comparison with those of closely related Bacillus species.</title>
        <authorList>
            <person name="Hu X."/>
            <person name="Fan W."/>
            <person name="Han B."/>
            <person name="Liu H."/>
            <person name="Zheng D."/>
            <person name="Li Q."/>
            <person name="Dong W."/>
            <person name="Yan J."/>
            <person name="Gao M."/>
            <person name="Berry C."/>
            <person name="Yuan Z."/>
        </authorList>
    </citation>
    <scope>NUCLEOTIDE SEQUENCE [LARGE SCALE GENOMIC DNA]</scope>
    <source>
        <strain>C3-41</strain>
    </source>
</reference>